<reference key="1">
    <citation type="journal article" date="1993" name="J. Virol.">
        <title>Distinguishing features of an infectious molecular clone of the highly divergent and noncytopathic human immunodeficiency virus type 2 UC1 strain.</title>
        <authorList>
            <person name="Barnett S.W."/>
            <person name="Quiroga M."/>
            <person name="Werner A."/>
            <person name="Dina D."/>
            <person name="Levy J.A."/>
        </authorList>
    </citation>
    <scope>NUCLEOTIDE SEQUENCE [GENOMIC RNA]</scope>
</reference>
<proteinExistence type="inferred from homology"/>
<keyword id="KW-0014">AIDS</keyword>
<keyword id="KW-0064">Aspartyl protease</keyword>
<keyword id="KW-0167">Capsid protein</keyword>
<keyword id="KW-0229">DNA integration</keyword>
<keyword id="KW-0233">DNA recombination</keyword>
<keyword id="KW-0238">DNA-binding</keyword>
<keyword id="KW-0239">DNA-directed DNA polymerase</keyword>
<keyword id="KW-0255">Endonuclease</keyword>
<keyword id="KW-1262">Eukaryotic host gene expression shutoff by virus</keyword>
<keyword id="KW-1193">Eukaryotic host translation shutoff by virus</keyword>
<keyword id="KW-1032">Host cell membrane</keyword>
<keyword id="KW-1035">Host cytoplasm</keyword>
<keyword id="KW-1039">Host endosome</keyword>
<keyword id="KW-1190">Host gene expression shutoff by virus</keyword>
<keyword id="KW-1043">Host membrane</keyword>
<keyword id="KW-1048">Host nucleus</keyword>
<keyword id="KW-0945">Host-virus interaction</keyword>
<keyword id="KW-0378">Hydrolase</keyword>
<keyword id="KW-0446">Lipid-binding</keyword>
<keyword id="KW-0449">Lipoprotein</keyword>
<keyword id="KW-0460">Magnesium</keyword>
<keyword id="KW-0472">Membrane</keyword>
<keyword id="KW-0479">Metal-binding</keyword>
<keyword id="KW-0511">Multifunctional enzyme</keyword>
<keyword id="KW-0519">Myristate</keyword>
<keyword id="KW-0540">Nuclease</keyword>
<keyword id="KW-0548">Nucleotidyltransferase</keyword>
<keyword id="KW-0597">Phosphoprotein</keyword>
<keyword id="KW-0645">Protease</keyword>
<keyword id="KW-0677">Repeat</keyword>
<keyword id="KW-0688">Ribosomal frameshifting</keyword>
<keyword id="KW-0694">RNA-binding</keyword>
<keyword id="KW-0695">RNA-directed DNA polymerase</keyword>
<keyword id="KW-0808">Transferase</keyword>
<keyword id="KW-1179">Viral genome integration</keyword>
<keyword id="KW-0543">Viral nucleoprotein</keyword>
<keyword id="KW-1163">Viral penetration into host nucleus</keyword>
<keyword id="KW-1188">Viral release from host cell</keyword>
<keyword id="KW-0946">Virion</keyword>
<keyword id="KW-0917">Virion maturation</keyword>
<keyword id="KW-1160">Virus entry into host cell</keyword>
<keyword id="KW-0862">Zinc</keyword>
<keyword id="KW-0863">Zinc-finger</keyword>
<comment type="function">
    <molecule>Gag-Pol polyprotein</molecule>
    <text evidence="1">Mediates, with Gag polyprotein, the essential events in virion assembly, including binding the plasma membrane, making the protein-protein interactions necessary to create spherical particles, recruiting the viral Env proteins, and packaging the genomic RNA via direct interactions with the RNA packaging sequence (Psi). Gag-Pol polyprotein may regulate its own translation, by the binding genomic RNA in the 5'-UTR. At low concentration, the polyprotein would promote translation, whereas at high concentration, the polyprotein would encapsidate genomic RNA and then shut off translation.</text>
</comment>
<comment type="function">
    <molecule>Matrix protein p17</molecule>
    <text evidence="8">Targets the polyprotein to the plasma membrane via a multipartite membrane-binding signal, that includes its myristoylated N-terminus. Matrix protein is part of the pre-integration complex. Implicated in the release from host cell mediated by Vpu. Binds to RNA.</text>
</comment>
<comment type="function">
    <molecule>Capsid protein p24</molecule>
    <text evidence="5 8">Forms the conical core that encapsulates the genomic RNA-nucleocapsid complex in the virion. Most core are conical, with only 7% tubular. The core is constituted by capsid protein hexamer subunits. The core is disassembled soon after virion entry (By similarity). Host restriction factors such as TRIM5-alpha or TRIMCyp bind retroviral capsids and cause premature capsid disassembly, leading to blocks in reverse transcription. Capsid restriction by TRIM5 is one of the factors which restricts HIV-1 to the human species. Host PIN1 apparently facilitates the virion uncoating. On the other hand, interactions with PDZD8 or CYPA stabilize the capsid.</text>
</comment>
<comment type="function">
    <molecule>Nucleocapsid protein p7</molecule>
    <text evidence="5">Encapsulates and protects viral dimeric unspliced genomic RNA (gRNA). Binds these RNAs through its zinc fingers. Acts as a nucleic acid chaperone which is involved in rearangement of nucleic acid secondary structure during gRNA retrotranscription. Also facilitates template switch leading to recombination. As part of the polyprotein, participates in gRNA dimerization, packaging, tRNA incorporation and virion assembly.</text>
</comment>
<comment type="function">
    <molecule>Protease</molecule>
    <text evidence="5 11">Aspartyl protease that mediates proteolytic cleavages of Gag and Gag-Pol polyproteins during or shortly after the release of the virion from the plasma membrane. Cleavages take place as an ordered, step-wise cascade to yield mature proteins. This process is called maturation. Displays maximal activity during the budding process just prior to particle release from the cell. Also cleaves Nef and Vif, probably concomitantly with viral structural proteins on maturation of virus particles. Hydrolyzes host EIF4GI and PABP1 in order to shut off the capped cellular mRNA translation. The resulting inhibition of cellular protein synthesis serves to ensure maximal viral gene expression and to evade host immune response (By similarity).</text>
</comment>
<comment type="function">
    <molecule>Reverse transcriptase/ribonuclease H</molecule>
    <text evidence="5">Multifunctional enzyme that converts the viral RNA genome into dsDNA in the cytoplasm, shortly after virus entry into the cell. This enzyme displays a DNA polymerase activity that can copy either DNA or RNA templates, and a ribonuclease H (RNase H) activity that cleaves the RNA strand of RNA-DNA heteroduplexes in a partially processive 3' to 5' endonucleasic mode. Conversion of viral genomic RNA into dsDNA requires many steps. A tRNA(3)-Lys binds to the primer-binding site (PBS) situated at the 5'-end of the viral RNA. RT uses the 3' end of the tRNA primer to perform a short round of RNA-dependent minus-strand DNA synthesis. The reading proceeds through the U5 region and ends after the repeated (R) region which is present at both ends of viral RNA. The portion of the RNA-DNA heteroduplex is digested by the RNase H, resulting in a ssDNA product attached to the tRNA primer. This ssDNA/tRNA hybridizes with the identical R region situated at the 3' end of viral RNA. This template exchange, known as minus-strand DNA strong stop transfer, can be either intra- or intermolecular. RT uses the 3' end of this newly synthesized short ssDNA to perform the RNA-dependent minus-strand DNA synthesis of the whole template. RNase H digests the RNA template except for two polypurine tracts (PPTs) situated at the 5'-end and near the center of the genome. It is not clear if both polymerase and RNase H activities are simultaneous. RNase H probably can proceed both in a polymerase-dependent (RNA cut into small fragments by the same RT performing DNA synthesis) and a polymerase-independent mode (cleavage of remaining RNA fragments by free RTs). Secondly, RT performs DNA-directed plus-strand DNA synthesis using the PPTs that have not been removed by RNase H as primers. PPTs and tRNA primers are then removed by RNase H. The 3' and 5' ssDNA PBS regions hybridize to form a circular dsDNA intermediate. Strand displacement synthesis by RT to the PBS and PPT ends produces a blunt ended, linear dsDNA copy of the viral genome that includes long terminal repeats (LTRs) at both ends.</text>
</comment>
<comment type="function">
    <molecule>Integrase</molecule>
    <text evidence="5">Catalyzes viral DNA integration into the host chromosome, by performing a series of DNA cutting and joining reactions. This enzyme activity takes place after virion entry into a cell and reverse transcription of the RNA genome in dsDNA. The first step in the integration process is 3' processing. This step requires a complex comprising the viral genome, matrix protein, Vpr and integrase. This complex is called the pre-integration complex (PIC). The integrase protein removes 2 nucleotides from each 3' end of the viral DNA, leaving recessed CA OH's at the 3' ends. In the second step, the PIC enters cell nucleus. This process is mediated through integrase and Vpr proteins, and allows the virus to infect a non dividing cell. This ability to enter the nucleus is specific of lentiviruses, other retroviruses cannot and rely on cell division to access cell chromosomes. In the third step, termed strand transfer, the integrase protein joins the previously processed 3' ends to the 5' ends of strands of target cellular DNA at the site of integration. The 5'-ends are produced by integrase-catalyzed staggered cuts, 5 bp apart. A Y-shaped, gapped, recombination intermediate results, with the 5'-ends of the viral DNA strands and the 3' ends of target DNA strands remaining unjoined, flanking a gap of 5 bp. The last step is viral DNA integration into host chromosome. This involves host DNA repair synthesis in which the 5 bp gaps between the unjoined strands are filled in and then ligated. Since this process occurs at both cuts flanking the HIV genome, a 5 bp duplication of host DNA is produced at the ends of HIV-1 integration. Alternatively, Integrase may catalyze the excision of viral DNA just after strand transfer, this is termed disintegration.</text>
</comment>
<comment type="catalytic activity">
    <reaction evidence="11">
        <text>Endopeptidase for which the P1 residue is preferably hydrophobic.</text>
        <dbReference type="EC" id="3.4.23.47"/>
    </reaction>
</comment>
<comment type="catalytic activity">
    <reaction evidence="1">
        <text>Endohydrolysis of RNA in RNA/DNA hybrids. Three different cleavage modes: 1. sequence-specific internal cleavage of RNA. Human immunodeficiency virus type 1 and Moloney murine leukemia virus enzymes prefer to cleave the RNA strand one nucleotide away from the RNA-DNA junction. 2. RNA 5'-end directed cleavage 13-19 nucleotides from the RNA end. 3. DNA 3'-end directed cleavage 15-20 nucleotides away from the primer terminus.</text>
        <dbReference type="EC" id="3.1.26.13"/>
    </reaction>
</comment>
<comment type="catalytic activity">
    <reaction evidence="1">
        <text>3'-end directed exonucleolytic cleavage of viral RNA-DNA hybrid.</text>
        <dbReference type="EC" id="3.1.13.2"/>
    </reaction>
</comment>
<comment type="catalytic activity">
    <reaction evidence="12">
        <text>DNA(n) + a 2'-deoxyribonucleoside 5'-triphosphate = DNA(n+1) + diphosphate</text>
        <dbReference type="Rhea" id="RHEA:22508"/>
        <dbReference type="Rhea" id="RHEA-COMP:17339"/>
        <dbReference type="Rhea" id="RHEA-COMP:17340"/>
        <dbReference type="ChEBI" id="CHEBI:33019"/>
        <dbReference type="ChEBI" id="CHEBI:61560"/>
        <dbReference type="ChEBI" id="CHEBI:173112"/>
        <dbReference type="EC" id="2.7.7.49"/>
    </reaction>
</comment>
<comment type="catalytic activity">
    <reaction evidence="12">
        <text>DNA(n) + a 2'-deoxyribonucleoside 5'-triphosphate = DNA(n+1) + diphosphate</text>
        <dbReference type="Rhea" id="RHEA:22508"/>
        <dbReference type="Rhea" id="RHEA-COMP:17339"/>
        <dbReference type="Rhea" id="RHEA-COMP:17340"/>
        <dbReference type="ChEBI" id="CHEBI:33019"/>
        <dbReference type="ChEBI" id="CHEBI:61560"/>
        <dbReference type="ChEBI" id="CHEBI:173112"/>
        <dbReference type="EC" id="2.7.7.7"/>
    </reaction>
</comment>
<comment type="cofactor">
    <cofactor evidence="1">
        <name>Mg(2+)</name>
        <dbReference type="ChEBI" id="CHEBI:18420"/>
    </cofactor>
    <text evidence="1">Binds 2 magnesium ions for reverse transcriptase polymerase activity.</text>
</comment>
<comment type="cofactor">
    <cofactor evidence="1">
        <name>Mg(2+)</name>
        <dbReference type="ChEBI" id="CHEBI:18420"/>
    </cofactor>
    <text evidence="1">Binds 2 magnesium ions for ribonuclease H (RNase H) activity. Substrate-binding is a precondition for magnesium binding.</text>
</comment>
<comment type="cofactor">
    <cofactor evidence="1">
        <name>Mg(2+)</name>
        <dbReference type="ChEBI" id="CHEBI:18420"/>
    </cofactor>
    <text evidence="1">Magnesium ions are required for integrase activity. Binds at least 1, maybe 2 magnesium ions.</text>
</comment>
<comment type="activity regulation">
    <text evidence="1">Protease: The viral protease is inhibited by many synthetic protease inhibitors (PIs), such as amprenavir, atazanavir, indinavir, loprinavir, nelfinavir, ritonavir and saquinavir. Use of protease inhibitors in tritherapy regimens permit more ambitious therapeutic strategies. Reverse transcriptase/ribonuclease H: RT can be inhibited either by nucleoside RT inhibitors (NRTIs) or by non nucleoside RT inhibitors (NNRTIs). NRTIs act as chain terminators, whereas NNRTIs inhibit DNA polymerization by binding a small hydrophobic pocket near the RT active site and inducing an allosteric change in this region. Classical NRTIs are abacavir, adefovir (PMEA), didanosine (ddI), lamivudine (3TC), stavudine (d4T), tenofovir (PMPA), zalcitabine (ddC), and zidovudine (AZT). Classical NNRTIs are atevirdine (BHAP U-87201E), delavirdine, efavirenz (DMP-266), emivirine (I-EBU), and nevirapine (BI-RG-587). The tritherapies used as a basic effective treatment of AIDS associate two NRTIs and one NNRTI.</text>
</comment>
<comment type="subunit">
    <molecule>Matrix protein p17</molecule>
    <text evidence="6 7">Homotrimer; further assembles as hexamers of trimers. Interacts with gp41 (via C-terminus). Interacts with host CALM1; this interaction induces a conformational change in the Matrix protein, triggering exposure of the myristate group. Interacts with host AP3D1; this interaction allows the polyprotein trafficking to multivesicular bodies during virus assembly. Part of the pre-integration complex (PIC) which is composed of viral genome, matrix protein, Vpr and integrase.</text>
</comment>
<comment type="subunit">
    <molecule>Capsid protein p24</molecule>
    <text evidence="2 6 7">Homodimer; the homodimer further multimerizes as homohexamers or homopentamers. Interacts with human PPIA/CYPA. Interacts with human NUP153. Interacts with host PDZD8; this interaction stabilizes the capsid. Interacts with monkey TRIM5; this interaction destabilizes the capsid.</text>
</comment>
<comment type="subunit">
    <molecule>Protease</molecule>
    <text evidence="5 8">Homodimer, whose active site consists of two apposed aspartic acid residues.</text>
</comment>
<comment type="subunit">
    <molecule>Reverse transcriptase/ribonuclease H</molecule>
    <text evidence="3">Heterodimer of p66 RT and p51 RT (RT p66/p51) (By similarity). Heterodimerization of RT is essential for DNA polymerase activity (By similarity). The overall folding of the subdomains is similar in p66 RT and p51 RT but the spatial arrangements of the subdomains are dramatically different (By similarity).</text>
</comment>
<comment type="subunit">
    <molecule>Integrase</molecule>
    <text evidence="4 5 8">Homotetramer; may further associate as a homohexadecamer (By similarity). Part of the pre-integration complex (PIC) which is composed of viral genome, matrix protein, Vpr and integrase. Interacts with human SMARCB1/INI1 and human PSIP1/LEDGF isoform 1. Interacts with human KPNA3; this interaction might play a role in nuclear import of the pre-integration complex (By similarity). Interacts with human NUP153; this interaction might play a role in nuclear import of the pre-integration complex (By similarity).</text>
</comment>
<comment type="subcellular location">
    <molecule>Gag-Pol polyprotein</molecule>
    <subcellularLocation>
        <location>Host cell membrane</location>
        <topology>Lipid-anchor</topology>
    </subcellularLocation>
    <subcellularLocation>
        <location>Host endosome</location>
        <location>Host multivesicular body</location>
    </subcellularLocation>
    <text evidence="8">These locations are linked to virus assembly sites. The main location is the cell membrane, but under some circumstances, late endosomal compartments can serve as productive sites for virion assembly.</text>
</comment>
<comment type="subcellular location">
    <molecule>Matrix protein p17</molecule>
    <subcellularLocation>
        <location>Virion membrane</location>
        <topology evidence="19">Lipid-anchor</topology>
    </subcellularLocation>
    <subcellularLocation>
        <location evidence="1">Host nucleus</location>
    </subcellularLocation>
    <subcellularLocation>
        <location evidence="1">Host cytoplasm</location>
    </subcellularLocation>
</comment>
<comment type="subcellular location">
    <molecule>Capsid protein p24</molecule>
    <subcellularLocation>
        <location evidence="19">Virion</location>
    </subcellularLocation>
</comment>
<comment type="subcellular location">
    <molecule>Nucleocapsid protein p7</molecule>
    <subcellularLocation>
        <location evidence="19">Virion</location>
    </subcellularLocation>
</comment>
<comment type="subcellular location">
    <molecule>Reverse transcriptase/ribonuclease H</molecule>
    <subcellularLocation>
        <location evidence="19">Virion</location>
    </subcellularLocation>
</comment>
<comment type="subcellular location">
    <molecule>Integrase</molecule>
    <subcellularLocation>
        <location evidence="19">Virion</location>
    </subcellularLocation>
    <subcellularLocation>
        <location evidence="19">Host nucleus</location>
    </subcellularLocation>
    <subcellularLocation>
        <location evidence="19">Host cytoplasm</location>
    </subcellularLocation>
    <text evidence="19">Nuclear at initial phase, cytoplasmic at assembly.</text>
</comment>
<comment type="alternative products">
    <event type="ribosomal frameshifting"/>
    <isoform>
        <id>Q76634-1</id>
        <name>Gag-Pol polyprotein</name>
        <sequence type="displayed"/>
    </isoform>
    <isoform>
        <id>Q76633-1</id>
        <name>Gag polyprotein</name>
        <sequence type="external"/>
    </isoform>
    <text>Translation results in the formation of the Gag polyprotein most of the time. Ribosomal frameshifting at the gag-pol genes boundary occurs at low frequency and produces the Gag-Pol polyprotein. This strategy of translation probably allows the virus to modulate the quantity of each viral protein. Maintenance of a correct Gag to Gag-Pol ratio is essential for RNA dimerization and viral infectivity.</text>
</comment>
<comment type="domain">
    <molecule>Reverse transcriptase/ribonuclease H</molecule>
    <text evidence="1">RT is structured in five subdomains: finger, palm, thumb, connection and RNase H. Within the palm subdomain, the 'primer grip' region is thought to be involved in the positioning of the primer terminus for accommodating the incoming nucleotide. The RNase H domain stabilizes the association of RT with primer-template.</text>
</comment>
<comment type="domain">
    <molecule>Reverse transcriptase/ribonuclease H</molecule>
    <text evidence="1">The tryptophan repeat motif is involved in RT p66/p51 dimerization (By similarity).</text>
</comment>
<comment type="domain">
    <molecule>Integrase</molecule>
    <text evidence="1">The core domain contains the D-x(n)-D-x(35)-E motif, named for the phylogenetically conserved glutamic acid and aspartic acid residues and the invariant 35 amino acid spacing between the second and third acidic residues. Each acidic residue of the D,D(35)E motif is independently essential for the 3'-processing and strand transfer activities of purified integrase protein.</text>
</comment>
<comment type="PTM">
    <molecule>Gag-Pol polyprotein</molecule>
    <text evidence="5 12">Specific enzymatic cleavages by the viral protease yield mature proteins. The protease is released by autocatalytic cleavage. The polyprotein is cleaved during and after budding, this process is termed maturation. Proteolytic cleavage of p66 RT removes the RNase H domain to yield the p51 RT subunit. Nucleocapsid protein p7 might be further cleaved after virus entry.</text>
</comment>
<comment type="miscellaneous">
    <molecule>Reverse transcriptase/ribonuclease H</molecule>
    <text evidence="1">Error-prone enzyme that lacks a proof-reading function. High mutations rate is a direct consequence of this characteristic. RT also displays frequent template switching leading to high recombination rate. Recombination mostly occurs between homologous regions of the two copackaged RNA genomes. If these two RNA molecules derive from different viral strains, reverse transcription will give rise to highly recombinated proviral DNAs.</text>
</comment>
<comment type="miscellaneous">
    <text>This isolate is from a Gambian case of 'neuro-AIDS'.</text>
</comment>
<comment type="miscellaneous">
    <molecule>Isoform Gag-Pol polyprotein</molecule>
    <text>Produced by -1 ribosomal frameshifting.</text>
</comment>
<evidence type="ECO:0000250" key="1"/>
<evidence type="ECO:0000250" key="2">
    <source>
        <dbReference type="UniProtKB" id="P03348"/>
    </source>
</evidence>
<evidence type="ECO:0000250" key="3">
    <source>
        <dbReference type="UniProtKB" id="P03366"/>
    </source>
</evidence>
<evidence type="ECO:0000250" key="4">
    <source>
        <dbReference type="UniProtKB" id="P03367"/>
    </source>
</evidence>
<evidence type="ECO:0000250" key="5">
    <source>
        <dbReference type="UniProtKB" id="P04585"/>
    </source>
</evidence>
<evidence type="ECO:0000250" key="6">
    <source>
        <dbReference type="UniProtKB" id="P04591"/>
    </source>
</evidence>
<evidence type="ECO:0000250" key="7">
    <source>
        <dbReference type="UniProtKB" id="P12493"/>
    </source>
</evidence>
<evidence type="ECO:0000250" key="8">
    <source>
        <dbReference type="UniProtKB" id="P12497"/>
    </source>
</evidence>
<evidence type="ECO:0000255" key="9"/>
<evidence type="ECO:0000255" key="10">
    <source>
        <dbReference type="PROSITE-ProRule" id="PRU00047"/>
    </source>
</evidence>
<evidence type="ECO:0000255" key="11">
    <source>
        <dbReference type="PROSITE-ProRule" id="PRU00275"/>
    </source>
</evidence>
<evidence type="ECO:0000255" key="12">
    <source>
        <dbReference type="PROSITE-ProRule" id="PRU00405"/>
    </source>
</evidence>
<evidence type="ECO:0000255" key="13">
    <source>
        <dbReference type="PROSITE-ProRule" id="PRU00408"/>
    </source>
</evidence>
<evidence type="ECO:0000255" key="14">
    <source>
        <dbReference type="PROSITE-ProRule" id="PRU00450"/>
    </source>
</evidence>
<evidence type="ECO:0000255" key="15">
    <source>
        <dbReference type="PROSITE-ProRule" id="PRU00457"/>
    </source>
</evidence>
<evidence type="ECO:0000255" key="16">
    <source>
        <dbReference type="PROSITE-ProRule" id="PRU00506"/>
    </source>
</evidence>
<evidence type="ECO:0000255" key="17">
    <source>
        <dbReference type="PROSITE-ProRule" id="PRU10094"/>
    </source>
</evidence>
<evidence type="ECO:0000256" key="18">
    <source>
        <dbReference type="SAM" id="MobiDB-lite"/>
    </source>
</evidence>
<evidence type="ECO:0000305" key="19"/>
<gene>
    <name type="primary">gag-pol</name>
</gene>
<organism>
    <name type="scientific">Human immunodeficiency virus type 2 subtype B (isolate UC1)</name>
    <name type="common">HIV-2</name>
    <dbReference type="NCBI Taxonomy" id="388822"/>
    <lineage>
        <taxon>Viruses</taxon>
        <taxon>Riboviria</taxon>
        <taxon>Pararnavirae</taxon>
        <taxon>Artverviricota</taxon>
        <taxon>Revtraviricetes</taxon>
        <taxon>Ortervirales</taxon>
        <taxon>Retroviridae</taxon>
        <taxon>Orthoretrovirinae</taxon>
        <taxon>Lentivirus</taxon>
        <taxon>Human immunodeficiency virus 2</taxon>
    </lineage>
</organism>
<protein>
    <recommendedName>
        <fullName>Gag-Pol polyprotein</fullName>
    </recommendedName>
    <alternativeName>
        <fullName>Pr160Gag-Pol</fullName>
    </alternativeName>
    <component>
        <recommendedName>
            <fullName>Matrix protein p17</fullName>
            <shortName>MA</shortName>
        </recommendedName>
    </component>
    <component>
        <recommendedName>
            <fullName>Capsid protein p24</fullName>
            <shortName>CA</shortName>
        </recommendedName>
    </component>
    <component>
        <recommendedName>
            <fullName evidence="8">Spacer peptide 1</fullName>
            <shortName>SP1</shortName>
        </recommendedName>
        <alternativeName>
            <fullName>p2</fullName>
        </alternativeName>
    </component>
    <component>
        <recommendedName>
            <fullName>Nucleocapsid protein p7</fullName>
            <shortName>NC</shortName>
        </recommendedName>
    </component>
    <component>
        <recommendedName>
            <fullName>Transframe peptide</fullName>
            <shortName>TF</shortName>
        </recommendedName>
    </component>
    <component>
        <recommendedName>
            <fullName>p6-pol</fullName>
            <shortName>p6*</shortName>
        </recommendedName>
    </component>
    <component>
        <recommendedName>
            <fullName>Protease</fullName>
            <ecNumber>3.4.23.47</ecNumber>
        </recommendedName>
        <alternativeName>
            <fullName>PR</fullName>
        </alternativeName>
        <alternativeName>
            <fullName>Retropepsin</fullName>
        </alternativeName>
    </component>
    <component>
        <recommendedName>
            <fullName>Reverse transcriptase/ribonuclease H</fullName>
            <ecNumber>2.7.7.49</ecNumber>
            <ecNumber>2.7.7.7</ecNumber>
            <ecNumber>3.1.26.13</ecNumber>
        </recommendedName>
        <alternativeName>
            <fullName>Exoribonuclease H</fullName>
            <ecNumber>3.1.13.2</ecNumber>
        </alternativeName>
        <alternativeName>
            <fullName>p66 RT</fullName>
        </alternativeName>
    </component>
    <component>
        <recommendedName>
            <fullName>p51 RT</fullName>
        </recommendedName>
    </component>
    <component>
        <recommendedName>
            <fullName>p15</fullName>
        </recommendedName>
    </component>
    <component>
        <recommendedName>
            <fullName>Integrase</fullName>
            <shortName>IN</shortName>
            <ecNumber evidence="5">2.7.7.-</ecNumber>
            <ecNumber evidence="5">3.1.-.-</ecNumber>
        </recommendedName>
    </component>
</protein>
<sequence>MGARSSVLSGKKTDELEKVRLRPGGKKRYCLKHIIWAVNELDRFGLAESLLESKEGCHKILTVLAPLVPTGSENLKSLFNTVCVIYCLHAEEKVKDTEEAKKIAQRHLAADTEKMPATSRPTAPPSGGNYPVQQIAGNYVHMPLSPRTLNAWVKLVEEKKFGAEVVPGFQALSEGCTPYDINQMLNCVGDHQAAMQIIREIINEEAADWDQQHPIPGPLPAGQLRDPRGSDIAGTTSTVEEQIQWMYRAQNPVPVGNIYRRWIQIGLQKCVRMYNPTNILDIKQGPKEPFQSYVDRFYKSLRAEQTDPAVKNWMTQTLLIQNANPDCKLVLKGLGMNPTLEEMLTACQGIGGPGQKARLMAEALKEALTPAPIPFAAAQQKAGKRGTVTCWNCGKVGHTAKQCRAPRRQGCWKCGKQGHIMSKCPERQAGFLRVRTLGKEASQLPHDPSASGSDTICTPDGPSRGHDTSGGDTICAPCRSSSGDAEKLHEDGETAEREPRETLQGGDRGFAAPQFSLWRRPVVRACIEGQPVEVLLDTGADDSIVAGIELGSNYTPKIVGGIGGFINTKEYKDVEIEVVGKRVRATIMTGDTPINIFGRNILNTLGMTLNFPVAKIEPVKVKLKPGKDGPKIRQWPLSKEKILALKEICEKMEKEGQLEEAPPTNPYNTPTFAIKKRDKNKWRMLIDFRELNKVTQDFTEVQLGIPHPAGLAEKRRITVLDVGDAYFSIPLDPNFRQYTAFTLPSINNAEPGKRYIYKVLPQGWKGSPAIFQYSMRKVLDPFRKANSDVIIIQYMDDILIASDRSDLEHDRVVSQLKELLNDMGFSTPEEKFQKDPPFKWMGYELWPKRWKLQKIQLPEKEVWTVNDIQKLVGVLNWAAQLFPGIKTRHICKLIRGKMTLTEEVQWTELAEAELQENKIILEQEQEGSYYKEGVPLEATVQKNLANQWTYKIHQGNRILKVGKYAKVKNTHTNGVRLLAHVVQKIGKEALVIWGEIPVFHLPVERETWDQWWTDYWQVTWIPEWDFVSTPPLVRLAYNLVKDPLEKVETYYTDGSCNRASKEGKAGYVTDRGKDKVKVLEQTTNQQAELEAFALALQDSGPQVNIIVDSQYVMGIVAGQPTETESPLVNQIIEEMIKKEAIYVGWVPAHRGLGGNQEVDHLVSQGIRQVLFLEKIEPAQEEHEKYHGNVKELVHKFGLPQLVAKQIVNSCDKCQQKGEAVHGQVNAELGTWQMDCTHLEGKVIIVAVHVASGFIEAEVIPQETGRQTALFLLKLASRWPITHLHTDNGANFTSQDVKMAAWWIGIEQTFGVPYNPQSQGVVEAMNHHLKNQIDRIRDQAVSIETVVLMAAHCMNFKRRGGIGDMTPAERLVNMITTEQEIQFFQAKNLKFQNFQVYYREGRDQLWKGPGELLWKGEGAVLIKVGTEIKVIPRRKAKIIRHYGGGKELDCGTDMEDTRQAREMAQSGQVPEA</sequence>
<organismHost>
    <name type="scientific">Homo sapiens</name>
    <name type="common">Human</name>
    <dbReference type="NCBI Taxonomy" id="9606"/>
</organismHost>
<name>POL_HV2UC</name>
<dbReference type="EC" id="3.4.23.47"/>
<dbReference type="EC" id="2.7.7.49"/>
<dbReference type="EC" id="2.7.7.7"/>
<dbReference type="EC" id="3.1.26.13"/>
<dbReference type="EC" id="3.1.13.2"/>
<dbReference type="EC" id="2.7.7.-" evidence="5"/>
<dbReference type="EC" id="3.1.-.-" evidence="5"/>
<dbReference type="EMBL" id="L07625">
    <property type="protein sequence ID" value="AAA43942.1"/>
    <property type="molecule type" value="Genomic_RNA"/>
</dbReference>
<dbReference type="PIR" id="S30478">
    <property type="entry name" value="S30478"/>
</dbReference>
<dbReference type="PIR" id="S30479">
    <property type="entry name" value="S30479"/>
</dbReference>
<dbReference type="SMR" id="Q76634"/>
<dbReference type="MEROPS" id="A02.002"/>
<dbReference type="PRO" id="PR:Q76634"/>
<dbReference type="Proteomes" id="UP000007428">
    <property type="component" value="Segment"/>
</dbReference>
<dbReference type="GO" id="GO:0043657">
    <property type="term" value="C:host cell"/>
    <property type="evidence" value="ECO:0007669"/>
    <property type="project" value="GOC"/>
</dbReference>
<dbReference type="GO" id="GO:0042025">
    <property type="term" value="C:host cell nucleus"/>
    <property type="evidence" value="ECO:0007669"/>
    <property type="project" value="UniProtKB-SubCell"/>
</dbReference>
<dbReference type="GO" id="GO:0020002">
    <property type="term" value="C:host cell plasma membrane"/>
    <property type="evidence" value="ECO:0007669"/>
    <property type="project" value="UniProtKB-SubCell"/>
</dbReference>
<dbReference type="GO" id="GO:0072494">
    <property type="term" value="C:host multivesicular body"/>
    <property type="evidence" value="ECO:0007669"/>
    <property type="project" value="UniProtKB-SubCell"/>
</dbReference>
<dbReference type="GO" id="GO:0016020">
    <property type="term" value="C:membrane"/>
    <property type="evidence" value="ECO:0007669"/>
    <property type="project" value="UniProtKB-KW"/>
</dbReference>
<dbReference type="GO" id="GO:0019013">
    <property type="term" value="C:viral nucleocapsid"/>
    <property type="evidence" value="ECO:0007669"/>
    <property type="project" value="UniProtKB-KW"/>
</dbReference>
<dbReference type="GO" id="GO:0055036">
    <property type="term" value="C:virion membrane"/>
    <property type="evidence" value="ECO:0007669"/>
    <property type="project" value="UniProtKB-SubCell"/>
</dbReference>
<dbReference type="GO" id="GO:0004190">
    <property type="term" value="F:aspartic-type endopeptidase activity"/>
    <property type="evidence" value="ECO:0007669"/>
    <property type="project" value="UniProtKB-KW"/>
</dbReference>
<dbReference type="GO" id="GO:0003677">
    <property type="term" value="F:DNA binding"/>
    <property type="evidence" value="ECO:0007669"/>
    <property type="project" value="UniProtKB-KW"/>
</dbReference>
<dbReference type="GO" id="GO:0003887">
    <property type="term" value="F:DNA-directed DNA polymerase activity"/>
    <property type="evidence" value="ECO:0007669"/>
    <property type="project" value="UniProtKB-KW"/>
</dbReference>
<dbReference type="GO" id="GO:0004533">
    <property type="term" value="F:exoribonuclease H activity"/>
    <property type="evidence" value="ECO:0007669"/>
    <property type="project" value="UniProtKB-EC"/>
</dbReference>
<dbReference type="GO" id="GO:0008289">
    <property type="term" value="F:lipid binding"/>
    <property type="evidence" value="ECO:0007669"/>
    <property type="project" value="UniProtKB-KW"/>
</dbReference>
<dbReference type="GO" id="GO:0035613">
    <property type="term" value="F:RNA stem-loop binding"/>
    <property type="evidence" value="ECO:0007669"/>
    <property type="project" value="TreeGrafter"/>
</dbReference>
<dbReference type="GO" id="GO:0003964">
    <property type="term" value="F:RNA-directed DNA polymerase activity"/>
    <property type="evidence" value="ECO:0007669"/>
    <property type="project" value="UniProtKB-KW"/>
</dbReference>
<dbReference type="GO" id="GO:0004523">
    <property type="term" value="F:RNA-DNA hybrid ribonuclease activity"/>
    <property type="evidence" value="ECO:0007669"/>
    <property type="project" value="InterPro"/>
</dbReference>
<dbReference type="GO" id="GO:0005198">
    <property type="term" value="F:structural molecule activity"/>
    <property type="evidence" value="ECO:0007669"/>
    <property type="project" value="InterPro"/>
</dbReference>
<dbReference type="GO" id="GO:0008270">
    <property type="term" value="F:zinc ion binding"/>
    <property type="evidence" value="ECO:0007669"/>
    <property type="project" value="UniProtKB-KW"/>
</dbReference>
<dbReference type="GO" id="GO:0015074">
    <property type="term" value="P:DNA integration"/>
    <property type="evidence" value="ECO:0007669"/>
    <property type="project" value="UniProtKB-KW"/>
</dbReference>
<dbReference type="GO" id="GO:0006310">
    <property type="term" value="P:DNA recombination"/>
    <property type="evidence" value="ECO:0007669"/>
    <property type="project" value="UniProtKB-KW"/>
</dbReference>
<dbReference type="GO" id="GO:0075713">
    <property type="term" value="P:establishment of integrated proviral latency"/>
    <property type="evidence" value="ECO:0007669"/>
    <property type="project" value="UniProtKB-KW"/>
</dbReference>
<dbReference type="GO" id="GO:0006508">
    <property type="term" value="P:proteolysis"/>
    <property type="evidence" value="ECO:0007669"/>
    <property type="project" value="UniProtKB-KW"/>
</dbReference>
<dbReference type="GO" id="GO:0046718">
    <property type="term" value="P:symbiont entry into host cell"/>
    <property type="evidence" value="ECO:0007669"/>
    <property type="project" value="UniProtKB-KW"/>
</dbReference>
<dbReference type="GO" id="GO:0039657">
    <property type="term" value="P:symbiont-mediated suppression of host gene expression"/>
    <property type="evidence" value="ECO:0007669"/>
    <property type="project" value="UniProtKB-KW"/>
</dbReference>
<dbReference type="GO" id="GO:0044826">
    <property type="term" value="P:viral genome integration into host DNA"/>
    <property type="evidence" value="ECO:0007669"/>
    <property type="project" value="UniProtKB-KW"/>
</dbReference>
<dbReference type="GO" id="GO:0075732">
    <property type="term" value="P:viral penetration into host nucleus"/>
    <property type="evidence" value="ECO:0007669"/>
    <property type="project" value="UniProtKB-KW"/>
</dbReference>
<dbReference type="GO" id="GO:0075523">
    <property type="term" value="P:viral translational frameshifting"/>
    <property type="evidence" value="ECO:0007669"/>
    <property type="project" value="UniProtKB-KW"/>
</dbReference>
<dbReference type="CDD" id="cd05482">
    <property type="entry name" value="HIV_retropepsin_like"/>
    <property type="match status" value="1"/>
</dbReference>
<dbReference type="Gene3D" id="1.10.10.200">
    <property type="match status" value="1"/>
</dbReference>
<dbReference type="Gene3D" id="1.10.1200.30">
    <property type="match status" value="1"/>
</dbReference>
<dbReference type="Gene3D" id="3.30.70.270">
    <property type="match status" value="3"/>
</dbReference>
<dbReference type="Gene3D" id="2.40.70.10">
    <property type="entry name" value="Acid Proteases"/>
    <property type="match status" value="1"/>
</dbReference>
<dbReference type="Gene3D" id="3.10.10.10">
    <property type="entry name" value="HIV Type 1 Reverse Transcriptase, subunit A, domain 1"/>
    <property type="match status" value="1"/>
</dbReference>
<dbReference type="Gene3D" id="1.10.375.10">
    <property type="entry name" value="Human Immunodeficiency Virus Type 1 Capsid Protein"/>
    <property type="match status" value="1"/>
</dbReference>
<dbReference type="Gene3D" id="1.10.150.90">
    <property type="entry name" value="Immunodeficiency lentiviruses, gag gene matrix protein p17"/>
    <property type="match status" value="1"/>
</dbReference>
<dbReference type="Gene3D" id="2.30.30.10">
    <property type="entry name" value="Integrase, C-terminal domain superfamily, retroviral"/>
    <property type="match status" value="1"/>
</dbReference>
<dbReference type="Gene3D" id="3.30.420.10">
    <property type="entry name" value="Ribonuclease H-like superfamily/Ribonuclease H"/>
    <property type="match status" value="2"/>
</dbReference>
<dbReference type="Gene3D" id="1.20.5.760">
    <property type="entry name" value="Single helix bin"/>
    <property type="match status" value="1"/>
</dbReference>
<dbReference type="Gene3D" id="4.10.60.10">
    <property type="entry name" value="Zinc finger, CCHC-type"/>
    <property type="match status" value="1"/>
</dbReference>
<dbReference type="InterPro" id="IPR001969">
    <property type="entry name" value="Aspartic_peptidase_AS"/>
</dbReference>
<dbReference type="InterPro" id="IPR043502">
    <property type="entry name" value="DNA/RNA_pol_sf"/>
</dbReference>
<dbReference type="InterPro" id="IPR045345">
    <property type="entry name" value="Gag_p24_C"/>
</dbReference>
<dbReference type="InterPro" id="IPR017856">
    <property type="entry name" value="Integrase-like_N"/>
</dbReference>
<dbReference type="InterPro" id="IPR036862">
    <property type="entry name" value="Integrase_C_dom_sf_retrovir"/>
</dbReference>
<dbReference type="InterPro" id="IPR001037">
    <property type="entry name" value="Integrase_C_retrovir"/>
</dbReference>
<dbReference type="InterPro" id="IPR001584">
    <property type="entry name" value="Integrase_cat-core"/>
</dbReference>
<dbReference type="InterPro" id="IPR003308">
    <property type="entry name" value="Integrase_Zn-bd_dom_N"/>
</dbReference>
<dbReference type="InterPro" id="IPR000071">
    <property type="entry name" value="Lentvrl_matrix_N"/>
</dbReference>
<dbReference type="InterPro" id="IPR012344">
    <property type="entry name" value="Matrix_HIV/RSV_N"/>
</dbReference>
<dbReference type="InterPro" id="IPR001995">
    <property type="entry name" value="Peptidase_A2_cat"/>
</dbReference>
<dbReference type="InterPro" id="IPR021109">
    <property type="entry name" value="Peptidase_aspartic_dom_sf"/>
</dbReference>
<dbReference type="InterPro" id="IPR034170">
    <property type="entry name" value="Retropepsin-like_cat_dom"/>
</dbReference>
<dbReference type="InterPro" id="IPR018061">
    <property type="entry name" value="Retropepsins"/>
</dbReference>
<dbReference type="InterPro" id="IPR008916">
    <property type="entry name" value="Retrov_capsid_C"/>
</dbReference>
<dbReference type="InterPro" id="IPR008919">
    <property type="entry name" value="Retrov_capsid_N"/>
</dbReference>
<dbReference type="InterPro" id="IPR010999">
    <property type="entry name" value="Retrovr_matrix"/>
</dbReference>
<dbReference type="InterPro" id="IPR043128">
    <property type="entry name" value="Rev_trsase/Diguanyl_cyclase"/>
</dbReference>
<dbReference type="InterPro" id="IPR012337">
    <property type="entry name" value="RNaseH-like_sf"/>
</dbReference>
<dbReference type="InterPro" id="IPR002156">
    <property type="entry name" value="RNaseH_domain"/>
</dbReference>
<dbReference type="InterPro" id="IPR036397">
    <property type="entry name" value="RNaseH_sf"/>
</dbReference>
<dbReference type="InterPro" id="IPR000477">
    <property type="entry name" value="RT_dom"/>
</dbReference>
<dbReference type="InterPro" id="IPR010659">
    <property type="entry name" value="RVT_connect"/>
</dbReference>
<dbReference type="InterPro" id="IPR010661">
    <property type="entry name" value="RVT_thumb"/>
</dbReference>
<dbReference type="InterPro" id="IPR001878">
    <property type="entry name" value="Znf_CCHC"/>
</dbReference>
<dbReference type="InterPro" id="IPR036875">
    <property type="entry name" value="Znf_CCHC_sf"/>
</dbReference>
<dbReference type="PANTHER" id="PTHR41694">
    <property type="entry name" value="ENDOGENOUS RETROVIRUS GROUP K MEMBER POL PROTEIN"/>
    <property type="match status" value="1"/>
</dbReference>
<dbReference type="PANTHER" id="PTHR41694:SF3">
    <property type="entry name" value="RNA-DIRECTED DNA POLYMERASE-RELATED"/>
    <property type="match status" value="1"/>
</dbReference>
<dbReference type="Pfam" id="PF00540">
    <property type="entry name" value="Gag_p17"/>
    <property type="match status" value="1"/>
</dbReference>
<dbReference type="Pfam" id="PF00607">
    <property type="entry name" value="Gag_p24"/>
    <property type="match status" value="1"/>
</dbReference>
<dbReference type="Pfam" id="PF19317">
    <property type="entry name" value="Gag_p24_C"/>
    <property type="match status" value="1"/>
</dbReference>
<dbReference type="Pfam" id="PF00552">
    <property type="entry name" value="IN_DBD_C"/>
    <property type="match status" value="1"/>
</dbReference>
<dbReference type="Pfam" id="PF02022">
    <property type="entry name" value="Integrase_Zn"/>
    <property type="match status" value="1"/>
</dbReference>
<dbReference type="Pfam" id="PF00075">
    <property type="entry name" value="RNase_H"/>
    <property type="match status" value="1"/>
</dbReference>
<dbReference type="Pfam" id="PF00665">
    <property type="entry name" value="rve"/>
    <property type="match status" value="1"/>
</dbReference>
<dbReference type="Pfam" id="PF00077">
    <property type="entry name" value="RVP"/>
    <property type="match status" value="1"/>
</dbReference>
<dbReference type="Pfam" id="PF00078">
    <property type="entry name" value="RVT_1"/>
    <property type="match status" value="1"/>
</dbReference>
<dbReference type="Pfam" id="PF06815">
    <property type="entry name" value="RVT_connect"/>
    <property type="match status" value="1"/>
</dbReference>
<dbReference type="Pfam" id="PF06817">
    <property type="entry name" value="RVT_thumb"/>
    <property type="match status" value="1"/>
</dbReference>
<dbReference type="Pfam" id="PF00098">
    <property type="entry name" value="zf-CCHC"/>
    <property type="match status" value="2"/>
</dbReference>
<dbReference type="PRINTS" id="PR00234">
    <property type="entry name" value="HIV1MATRIX"/>
</dbReference>
<dbReference type="SMART" id="SM00343">
    <property type="entry name" value="ZnF_C2HC"/>
    <property type="match status" value="2"/>
</dbReference>
<dbReference type="SUPFAM" id="SSF50630">
    <property type="entry name" value="Acid proteases"/>
    <property type="match status" value="1"/>
</dbReference>
<dbReference type="SUPFAM" id="SSF50122">
    <property type="entry name" value="DNA-binding domain of retroviral integrase"/>
    <property type="match status" value="1"/>
</dbReference>
<dbReference type="SUPFAM" id="SSF56672">
    <property type="entry name" value="DNA/RNA polymerases"/>
    <property type="match status" value="1"/>
</dbReference>
<dbReference type="SUPFAM" id="SSF46919">
    <property type="entry name" value="N-terminal Zn binding domain of HIV integrase"/>
    <property type="match status" value="1"/>
</dbReference>
<dbReference type="SUPFAM" id="SSF47836">
    <property type="entry name" value="Retroviral matrix proteins"/>
    <property type="match status" value="1"/>
</dbReference>
<dbReference type="SUPFAM" id="SSF47353">
    <property type="entry name" value="Retrovirus capsid dimerization domain-like"/>
    <property type="match status" value="1"/>
</dbReference>
<dbReference type="SUPFAM" id="SSF47943">
    <property type="entry name" value="Retrovirus capsid protein, N-terminal core domain"/>
    <property type="match status" value="1"/>
</dbReference>
<dbReference type="SUPFAM" id="SSF57756">
    <property type="entry name" value="Retrovirus zinc finger-like domains"/>
    <property type="match status" value="1"/>
</dbReference>
<dbReference type="SUPFAM" id="SSF53098">
    <property type="entry name" value="Ribonuclease H-like"/>
    <property type="match status" value="2"/>
</dbReference>
<dbReference type="PROSITE" id="PS50175">
    <property type="entry name" value="ASP_PROT_RETROV"/>
    <property type="match status" value="1"/>
</dbReference>
<dbReference type="PROSITE" id="PS00141">
    <property type="entry name" value="ASP_PROTEASE"/>
    <property type="match status" value="1"/>
</dbReference>
<dbReference type="PROSITE" id="PS50994">
    <property type="entry name" value="INTEGRASE"/>
    <property type="match status" value="1"/>
</dbReference>
<dbReference type="PROSITE" id="PS51027">
    <property type="entry name" value="INTEGRASE_DBD"/>
    <property type="match status" value="1"/>
</dbReference>
<dbReference type="PROSITE" id="PS50879">
    <property type="entry name" value="RNASE_H_1"/>
    <property type="match status" value="1"/>
</dbReference>
<dbReference type="PROSITE" id="PS50878">
    <property type="entry name" value="RT_POL"/>
    <property type="match status" value="1"/>
</dbReference>
<dbReference type="PROSITE" id="PS50158">
    <property type="entry name" value="ZF_CCHC"/>
    <property type="match status" value="2"/>
</dbReference>
<dbReference type="PROSITE" id="PS50876">
    <property type="entry name" value="ZF_INTEGRASE"/>
    <property type="match status" value="1"/>
</dbReference>
<accession>Q76634</accession>
<feature type="initiator methionine" description="Removed; by host" evidence="1">
    <location>
        <position position="1"/>
    </location>
</feature>
<feature type="chain" id="PRO_0000261301" description="Gag-Pol polyprotein">
    <location>
        <begin position="2"/>
        <end position="1471"/>
    </location>
</feature>
<feature type="chain" id="PRO_0000246616" description="Matrix protein p17" evidence="1">
    <location>
        <begin position="2"/>
        <end position="130"/>
    </location>
</feature>
<feature type="chain" id="PRO_0000246617" description="Capsid protein p24" evidence="1">
    <location>
        <begin position="131"/>
        <end position="360"/>
    </location>
</feature>
<feature type="peptide" id="PRO_0000246618" description="Spacer peptide 1" evidence="1">
    <location>
        <begin position="361"/>
        <end position="377"/>
    </location>
</feature>
<feature type="chain" id="PRO_0000246619" description="Nucleocapsid protein p7" evidence="1">
    <location>
        <begin position="378"/>
        <end position="430"/>
    </location>
</feature>
<feature type="peptide" id="PRO_0000246750" description="Transframe peptide" evidence="9">
    <location>
        <begin position="431"/>
        <end position="444"/>
    </location>
</feature>
<feature type="chain" id="PRO_0000246620" description="p6-pol" evidence="9">
    <location>
        <begin position="445"/>
        <end position="512"/>
    </location>
</feature>
<feature type="chain" id="PRO_0000246621" description="Protease" evidence="1">
    <location>
        <begin position="513"/>
        <end position="611"/>
    </location>
</feature>
<feature type="chain" id="PRO_0000246622" description="Reverse transcriptase/ribonuclease H" evidence="1">
    <location>
        <begin position="612"/>
        <end position="1170"/>
    </location>
</feature>
<feature type="chain" id="PRO_0000246623" description="p51 RT" evidence="1">
    <location>
        <begin position="612"/>
        <end position="1050"/>
    </location>
</feature>
<feature type="chain" id="PRO_0000246624" description="p15" evidence="1">
    <location>
        <begin position="1051"/>
        <end position="1170"/>
    </location>
</feature>
<feature type="chain" id="PRO_0000246625" description="Integrase" evidence="1">
    <location>
        <begin position="1171"/>
        <end position="1471"/>
    </location>
</feature>
<feature type="domain" description="Peptidase A2" evidence="11">
    <location>
        <begin position="533"/>
        <end position="602"/>
    </location>
</feature>
<feature type="domain" description="Reverse transcriptase" evidence="12">
    <location>
        <begin position="656"/>
        <end position="846"/>
    </location>
</feature>
<feature type="domain" description="RNase H type-1" evidence="13">
    <location>
        <begin position="1044"/>
        <end position="1167"/>
    </location>
</feature>
<feature type="domain" description="Integrase catalytic" evidence="15">
    <location>
        <begin position="1224"/>
        <end position="1375"/>
    </location>
</feature>
<feature type="zinc finger region" description="CCHC-type 1" evidence="10">
    <location>
        <begin position="388"/>
        <end position="405"/>
    </location>
</feature>
<feature type="zinc finger region" description="CCHC-type 2" evidence="10">
    <location>
        <begin position="409"/>
        <end position="426"/>
    </location>
</feature>
<feature type="zinc finger region" description="Integrase-type" evidence="14">
    <location>
        <begin position="1173"/>
        <end position="1214"/>
    </location>
</feature>
<feature type="DNA-binding region" description="Integrase-type" evidence="16">
    <location>
        <begin position="1393"/>
        <end position="1440"/>
    </location>
</feature>
<feature type="region of interest" description="Interaction with Gp41" evidence="8">
    <location>
        <begin position="7"/>
        <end position="31"/>
    </location>
</feature>
<feature type="region of interest" description="Disordered" evidence="18">
    <location>
        <begin position="105"/>
        <end position="130"/>
    </location>
</feature>
<feature type="region of interest" description="Interaction with human PPIA/CYPA and NUP153" evidence="8">
    <location>
        <begin position="186"/>
        <end position="223"/>
    </location>
</feature>
<feature type="region of interest" description="Dimerization/Multimerization of capsid protein p24" evidence="5">
    <location>
        <begin position="274"/>
        <end position="360"/>
    </location>
</feature>
<feature type="region of interest" description="Disordered" evidence="18">
    <location>
        <begin position="441"/>
        <end position="508"/>
    </location>
</feature>
<feature type="region of interest" description="Dimerization of protease" evidence="5">
    <location>
        <begin position="513"/>
        <end position="517"/>
    </location>
</feature>
<feature type="region of interest" description="Dimerization of protease" evidence="5">
    <location>
        <begin position="561"/>
        <end position="567"/>
    </location>
</feature>
<feature type="region of interest" description="Dimerization of protease" evidence="5">
    <location>
        <begin position="600"/>
        <end position="612"/>
    </location>
</feature>
<feature type="region of interest" description="RT 'primer grip'" evidence="1">
    <location>
        <begin position="838"/>
        <end position="846"/>
    </location>
</feature>
<feature type="short sequence motif" description="Nuclear export signal" evidence="1">
    <location>
        <begin position="16"/>
        <end position="22"/>
    </location>
</feature>
<feature type="short sequence motif" description="Nuclear localization signal" evidence="1">
    <location>
        <begin position="26"/>
        <end position="32"/>
    </location>
</feature>
<feature type="short sequence motif" description="Tryptophan repeat motif" evidence="1">
    <location>
        <begin position="1008"/>
        <end position="1024"/>
    </location>
</feature>
<feature type="compositionally biased region" description="Basic and acidic residues" evidence="18">
    <location>
        <begin position="105"/>
        <end position="114"/>
    </location>
</feature>
<feature type="compositionally biased region" description="Basic and acidic residues" evidence="18">
    <location>
        <begin position="484"/>
        <end position="501"/>
    </location>
</feature>
<feature type="active site" description="For protease activity; shared with dimeric partner" evidence="17">
    <location>
        <position position="537"/>
    </location>
</feature>
<feature type="binding site" evidence="1">
    <location>
        <position position="721"/>
    </location>
    <ligand>
        <name>Mg(2+)</name>
        <dbReference type="ChEBI" id="CHEBI:18420"/>
        <label>1</label>
        <note>catalytic; for reverse transcriptase activity</note>
    </ligand>
</feature>
<feature type="binding site" evidence="1">
    <location>
        <position position="796"/>
    </location>
    <ligand>
        <name>Mg(2+)</name>
        <dbReference type="ChEBI" id="CHEBI:18420"/>
        <label>1</label>
        <note>catalytic; for reverse transcriptase activity</note>
    </ligand>
</feature>
<feature type="binding site" evidence="1">
    <location>
        <position position="797"/>
    </location>
    <ligand>
        <name>Mg(2+)</name>
        <dbReference type="ChEBI" id="CHEBI:18420"/>
        <label>1</label>
        <note>catalytic; for reverse transcriptase activity</note>
    </ligand>
</feature>
<feature type="binding site" evidence="1">
    <location>
        <position position="1053"/>
    </location>
    <ligand>
        <name>Mg(2+)</name>
        <dbReference type="ChEBI" id="CHEBI:18420"/>
        <label>2</label>
        <note>catalytic; for RNase H activity</note>
    </ligand>
</feature>
<feature type="binding site" evidence="1">
    <location>
        <position position="1088"/>
    </location>
    <ligand>
        <name>Mg(2+)</name>
        <dbReference type="ChEBI" id="CHEBI:18420"/>
        <label>2</label>
        <note>catalytic; for RNase H activity</note>
    </ligand>
</feature>
<feature type="binding site" evidence="1">
    <location>
        <position position="1108"/>
    </location>
    <ligand>
        <name>Mg(2+)</name>
        <dbReference type="ChEBI" id="CHEBI:18420"/>
        <label>2</label>
        <note>catalytic; for RNase H activity</note>
    </ligand>
</feature>
<feature type="binding site" evidence="1">
    <location>
        <position position="1159"/>
    </location>
    <ligand>
        <name>Mg(2+)</name>
        <dbReference type="ChEBI" id="CHEBI:18420"/>
        <label>2</label>
        <note>catalytic; for RNase H activity</note>
    </ligand>
</feature>
<feature type="binding site" evidence="14">
    <location>
        <position position="1182"/>
    </location>
    <ligand>
        <name>Zn(2+)</name>
        <dbReference type="ChEBI" id="CHEBI:29105"/>
    </ligand>
</feature>
<feature type="binding site" evidence="14">
    <location>
        <position position="1186"/>
    </location>
    <ligand>
        <name>Zn(2+)</name>
        <dbReference type="ChEBI" id="CHEBI:29105"/>
    </ligand>
</feature>
<feature type="binding site" evidence="14">
    <location>
        <position position="1210"/>
    </location>
    <ligand>
        <name>Zn(2+)</name>
        <dbReference type="ChEBI" id="CHEBI:29105"/>
    </ligand>
</feature>
<feature type="binding site" evidence="14">
    <location>
        <position position="1213"/>
    </location>
    <ligand>
        <name>Zn(2+)</name>
        <dbReference type="ChEBI" id="CHEBI:29105"/>
    </ligand>
</feature>
<feature type="binding site" evidence="1">
    <location>
        <position position="1234"/>
    </location>
    <ligand>
        <name>Mg(2+)</name>
        <dbReference type="ChEBI" id="CHEBI:18420"/>
        <label>3</label>
        <note>catalytic; for integrase activity</note>
    </ligand>
</feature>
<feature type="binding site" evidence="1">
    <location>
        <position position="1286"/>
    </location>
    <ligand>
        <name>Mg(2+)</name>
        <dbReference type="ChEBI" id="CHEBI:18420"/>
        <label>3</label>
        <note>catalytic; for integrase activity</note>
    </ligand>
</feature>
<feature type="binding site" evidence="5">
    <location>
        <position position="1322"/>
    </location>
    <ligand>
        <name>Mg(2+)</name>
        <dbReference type="ChEBI" id="CHEBI:18420"/>
        <label>3</label>
        <note>catalytic; for integrase activity</note>
    </ligand>
</feature>
<feature type="site" description="Cleavage; by viral protease" evidence="9">
    <location>
        <begin position="130"/>
        <end position="131"/>
    </location>
</feature>
<feature type="site" description="Cis/trans isomerization of proline peptide bond; by human PPIA/CYPA" evidence="1">
    <location>
        <begin position="217"/>
        <end position="218"/>
    </location>
</feature>
<feature type="site" description="Cleavage; by viral protease" evidence="1">
    <location>
        <begin position="360"/>
        <end position="361"/>
    </location>
</feature>
<feature type="site" description="Cleavage; by viral protease" evidence="1">
    <location>
        <begin position="377"/>
        <end position="378"/>
    </location>
</feature>
<feature type="site" description="Cleavage; by viral protease" evidence="9">
    <location>
        <begin position="430"/>
        <end position="431"/>
    </location>
</feature>
<feature type="site" description="Cleavage; by viral protease" evidence="1">
    <location>
        <begin position="443" status="uncertain"/>
        <end position="444" status="uncertain"/>
    </location>
</feature>
<feature type="site" description="Cleavage; by viral protease" evidence="9">
    <location>
        <begin position="511" status="uncertain"/>
        <end position="512" status="uncertain"/>
    </location>
</feature>
<feature type="site" description="Cleavage; by viral protease" evidence="9">
    <location>
        <begin position="611"/>
        <end position="612"/>
    </location>
</feature>
<feature type="site" description="Essential for RT p66/p51 heterodimerization" evidence="1">
    <location>
        <position position="1011"/>
    </location>
</feature>
<feature type="site" description="Essential for RT p66/p51 heterodimerization" evidence="1">
    <location>
        <position position="1024"/>
    </location>
</feature>
<feature type="site" description="Cleavage; by viral protease; partial" evidence="9">
    <location>
        <begin position="1049" status="uncertain"/>
        <end position="1050" status="uncertain"/>
    </location>
</feature>
<feature type="site" description="Cleavage; by viral protease" evidence="1">
    <location>
        <begin position="1170"/>
        <end position="1171"/>
    </location>
</feature>
<feature type="modified residue" description="Phosphotyrosine; by host" evidence="1">
    <location>
        <position position="130"/>
    </location>
</feature>
<feature type="lipid moiety-binding region" description="N-myristoyl glycine; by host" evidence="1">
    <location>
        <position position="2"/>
    </location>
</feature>